<accession>A9AAP2</accession>
<gene>
    <name type="ordered locus">MmarC6_1603</name>
</gene>
<comment type="similarity">
    <text evidence="1">Belongs to the UPF0235 family.</text>
</comment>
<organism>
    <name type="scientific">Methanococcus maripaludis (strain C6 / ATCC BAA-1332)</name>
    <dbReference type="NCBI Taxonomy" id="444158"/>
    <lineage>
        <taxon>Archaea</taxon>
        <taxon>Methanobacteriati</taxon>
        <taxon>Methanobacteriota</taxon>
        <taxon>Methanomada group</taxon>
        <taxon>Methanococci</taxon>
        <taxon>Methanococcales</taxon>
        <taxon>Methanococcaceae</taxon>
        <taxon>Methanococcus</taxon>
    </lineage>
</organism>
<evidence type="ECO:0000255" key="1">
    <source>
        <dbReference type="HAMAP-Rule" id="MF_00634"/>
    </source>
</evidence>
<name>Y1603_METM6</name>
<reference key="1">
    <citation type="submission" date="2007-10" db="EMBL/GenBank/DDBJ databases">
        <title>Complete sequence of Methanococcus maripaludis C6.</title>
        <authorList>
            <consortium name="US DOE Joint Genome Institute"/>
            <person name="Copeland A."/>
            <person name="Lucas S."/>
            <person name="Lapidus A."/>
            <person name="Barry K."/>
            <person name="Glavina del Rio T."/>
            <person name="Dalin E."/>
            <person name="Tice H."/>
            <person name="Pitluck S."/>
            <person name="Clum A."/>
            <person name="Schmutz J."/>
            <person name="Larimer F."/>
            <person name="Land M."/>
            <person name="Hauser L."/>
            <person name="Kyrpides N."/>
            <person name="Mikhailova N."/>
            <person name="Sieprawska-Lupa M."/>
            <person name="Whitman W.B."/>
            <person name="Richardson P."/>
        </authorList>
    </citation>
    <scope>NUCLEOTIDE SEQUENCE [LARGE SCALE GENOMIC DNA]</scope>
    <source>
        <strain>C6 / ATCC BAA-1332</strain>
    </source>
</reference>
<feature type="chain" id="PRO_1000130694" description="UPF0235 protein MmarC6_1603">
    <location>
        <begin position="1"/>
        <end position="101"/>
    </location>
</feature>
<sequence length="101" mass="11504">MIKEIVKESEKGILIDIEVTTNAKKNEIGKINEWRKRIEIRIKEQPIEGKANKAIIKFLKGIFKSEISINSGTTSSQKTVLIPDKTKEDVVKILKKEIKSI</sequence>
<dbReference type="EMBL" id="CP000867">
    <property type="protein sequence ID" value="ABX02415.1"/>
    <property type="molecule type" value="Genomic_DNA"/>
</dbReference>
<dbReference type="SMR" id="A9AAP2"/>
<dbReference type="STRING" id="444158.MmarC6_1603"/>
<dbReference type="KEGG" id="mmx:MmarC6_1603"/>
<dbReference type="eggNOG" id="arCOG04058">
    <property type="taxonomic scope" value="Archaea"/>
</dbReference>
<dbReference type="HOGENOM" id="CLU_130694_6_1_2"/>
<dbReference type="OrthoDB" id="53248at2157"/>
<dbReference type="PhylomeDB" id="A9AAP2"/>
<dbReference type="GO" id="GO:0005737">
    <property type="term" value="C:cytoplasm"/>
    <property type="evidence" value="ECO:0007669"/>
    <property type="project" value="TreeGrafter"/>
</dbReference>
<dbReference type="Gene3D" id="3.30.1200.10">
    <property type="entry name" value="YggU-like"/>
    <property type="match status" value="1"/>
</dbReference>
<dbReference type="HAMAP" id="MF_00634">
    <property type="entry name" value="UPF0235"/>
    <property type="match status" value="1"/>
</dbReference>
<dbReference type="InterPro" id="IPR003746">
    <property type="entry name" value="DUF167"/>
</dbReference>
<dbReference type="InterPro" id="IPR036591">
    <property type="entry name" value="YggU-like_sf"/>
</dbReference>
<dbReference type="NCBIfam" id="TIGR00251">
    <property type="entry name" value="DUF167 family protein"/>
    <property type="match status" value="1"/>
</dbReference>
<dbReference type="PANTHER" id="PTHR13420">
    <property type="entry name" value="UPF0235 PROTEIN C15ORF40"/>
    <property type="match status" value="1"/>
</dbReference>
<dbReference type="PANTHER" id="PTHR13420:SF7">
    <property type="entry name" value="UPF0235 PROTEIN C15ORF40"/>
    <property type="match status" value="1"/>
</dbReference>
<dbReference type="Pfam" id="PF02594">
    <property type="entry name" value="DUF167"/>
    <property type="match status" value="1"/>
</dbReference>
<dbReference type="SMART" id="SM01152">
    <property type="entry name" value="DUF167"/>
    <property type="match status" value="1"/>
</dbReference>
<dbReference type="SUPFAM" id="SSF69786">
    <property type="entry name" value="YggU-like"/>
    <property type="match status" value="1"/>
</dbReference>
<protein>
    <recommendedName>
        <fullName evidence="1">UPF0235 protein MmarC6_1603</fullName>
    </recommendedName>
</protein>
<proteinExistence type="inferred from homology"/>